<feature type="chain" id="PRO_0000250422" description="Beta-1,3-N-acetylglucosaminyltransferase manic fringe">
    <location>
        <begin position="1"/>
        <end position="360"/>
    </location>
</feature>
<feature type="topological domain" description="Cytoplasmic" evidence="3">
    <location>
        <begin position="1"/>
        <end position="5"/>
    </location>
</feature>
<feature type="transmembrane region" description="Helical; Signal-anchor for type II membrane protein" evidence="3">
    <location>
        <begin position="6"/>
        <end position="26"/>
    </location>
</feature>
<feature type="topological domain" description="Lumenal" evidence="3">
    <location>
        <begin position="27"/>
        <end position="360"/>
    </location>
</feature>
<feature type="region of interest" description="Disordered" evidence="4">
    <location>
        <begin position="51"/>
        <end position="74"/>
    </location>
</feature>
<feature type="compositionally biased region" description="Basic and acidic residues" evidence="4">
    <location>
        <begin position="55"/>
        <end position="74"/>
    </location>
</feature>
<feature type="active site" evidence="1">
    <location>
        <position position="261"/>
    </location>
</feature>
<feature type="binding site" evidence="1">
    <location>
        <position position="100"/>
    </location>
    <ligand>
        <name>substrate</name>
    </ligand>
</feature>
<feature type="binding site" evidence="1">
    <location>
        <position position="172"/>
    </location>
    <ligand>
        <name>substrate</name>
    </ligand>
</feature>
<feature type="binding site" evidence="1">
    <location>
        <position position="173"/>
    </location>
    <ligand>
        <name>Mn(2+)</name>
        <dbReference type="ChEBI" id="CHEBI:29035"/>
    </ligand>
</feature>
<feature type="binding site" evidence="1">
    <location>
        <position position="285"/>
    </location>
    <ligand>
        <name>Mn(2+)</name>
        <dbReference type="ChEBI" id="CHEBI:29035"/>
    </ligand>
</feature>
<feature type="glycosylation site" description="N-linked (GlcNAc...) asparagine" evidence="3">
    <location>
        <position position="214"/>
    </location>
</feature>
<feature type="disulfide bond" evidence="1">
    <location>
        <begin position="139"/>
        <end position="150"/>
    </location>
</feature>
<feature type="disulfide bond" evidence="1">
    <location>
        <begin position="168"/>
        <end position="231"/>
    </location>
</feature>
<feature type="disulfide bond" evidence="1">
    <location>
        <begin position="335"/>
        <end position="344"/>
    </location>
</feature>
<feature type="sequence conflict" description="In Ref. 2; AAI15219." evidence="6" ref="2">
    <original>D</original>
    <variation>N</variation>
    <location>
        <position position="40"/>
    </location>
</feature>
<feature type="sequence conflict" description="In Ref. 2; AAI15219." evidence="6" ref="2">
    <original>A</original>
    <variation>V</variation>
    <location>
        <position position="125"/>
    </location>
</feature>
<organism>
    <name type="scientific">Danio rerio</name>
    <name type="common">Zebrafish</name>
    <name type="synonym">Brachydanio rerio</name>
    <dbReference type="NCBI Taxonomy" id="7955"/>
    <lineage>
        <taxon>Eukaryota</taxon>
        <taxon>Metazoa</taxon>
        <taxon>Chordata</taxon>
        <taxon>Craniata</taxon>
        <taxon>Vertebrata</taxon>
        <taxon>Euteleostomi</taxon>
        <taxon>Actinopterygii</taxon>
        <taxon>Neopterygii</taxon>
        <taxon>Teleostei</taxon>
        <taxon>Ostariophysi</taxon>
        <taxon>Cypriniformes</taxon>
        <taxon>Danionidae</taxon>
        <taxon>Danioninae</taxon>
        <taxon>Danio</taxon>
    </lineage>
</organism>
<protein>
    <recommendedName>
        <fullName evidence="6">Beta-1,3-N-acetylglucosaminyltransferase manic fringe</fullName>
        <ecNumber evidence="2">2.4.1.222</ecNumber>
    </recommendedName>
    <alternativeName>
        <fullName>O-fucosylpeptide 3-beta-N-acetylglucosaminyltransferase</fullName>
    </alternativeName>
</protein>
<sequence>MILRRLFHVLPAFAFTLFILVLLDLQLRTRSDQKPQNAHDGHQRTTFISETTAENQHRDGAHEKEKAEGQKWTEVRSTPPLELSDIFIAVKTTGRFHKSRLALLLETWISETKEHTYIFTDSPDADISSEGFNVVVTNCSPEHSHQALSCKMAAEYDYFMASYKKWLCHVDDDNYLNPGALLSLLMAFPADGDIYVGKPSLDRPMRAQELLEGNKTRDVHFWFATGGAGFCLSRNLAERMAPWASGPRFEQTSAVIMLPDDCTVGFIVERRLGISMIHSNMFHSHLENLLLLSPSDIPKQVTLSYGWFESKMNSVELKGVFTKDEDPSRFRTVHCLLYPTTSWCPVALKSALSWNQHVMH</sequence>
<name>MFNG_DANRE</name>
<gene>
    <name evidence="8 9" type="primary">mfng</name>
</gene>
<evidence type="ECO:0000250" key="1"/>
<evidence type="ECO:0000250" key="2">
    <source>
        <dbReference type="UniProtKB" id="O09008"/>
    </source>
</evidence>
<evidence type="ECO:0000255" key="3"/>
<evidence type="ECO:0000256" key="4">
    <source>
        <dbReference type="SAM" id="MobiDB-lite"/>
    </source>
</evidence>
<evidence type="ECO:0000269" key="5">
    <source>
    </source>
</evidence>
<evidence type="ECO:0000305" key="6"/>
<evidence type="ECO:0000312" key="7">
    <source>
        <dbReference type="EMBL" id="AAI15219.1"/>
    </source>
</evidence>
<evidence type="ECO:0000312" key="8">
    <source>
        <dbReference type="EMBL" id="AAT46070.1"/>
    </source>
</evidence>
<evidence type="ECO:0000312" key="9">
    <source>
        <dbReference type="ZFIN" id="ZDB-GENE-041130-1"/>
    </source>
</evidence>
<reference evidence="6 8" key="1">
    <citation type="journal article" date="2004" name="Dev. Dyn.">
        <title>Sequence and embryonic expression of three zebrafish fringe genes: lunatic fringe, radical fringe, and manic fringe.</title>
        <authorList>
            <person name="Qiu X."/>
            <person name="Xu H."/>
            <person name="Haddon C."/>
            <person name="Lewis J."/>
            <person name="Jiang Y.-J."/>
        </authorList>
    </citation>
    <scope>NUCLEOTIDE SEQUENCE [MRNA]</scope>
    <scope>DEVELOPMENTAL STAGE</scope>
</reference>
<reference evidence="7" key="2">
    <citation type="submission" date="2006-10" db="EMBL/GenBank/DDBJ databases">
        <authorList>
            <consortium name="NIH - Zebrafish Gene Collection (ZGC) project"/>
        </authorList>
    </citation>
    <scope>NUCLEOTIDE SEQUENCE [LARGE SCALE MRNA]</scope>
</reference>
<accession>Q5YB40</accession>
<accession>A0JMI3</accession>
<accession>Q1RLZ4</accession>
<keyword id="KW-0217">Developmental protein</keyword>
<keyword id="KW-1015">Disulfide bond</keyword>
<keyword id="KW-0325">Glycoprotein</keyword>
<keyword id="KW-0328">Glycosyltransferase</keyword>
<keyword id="KW-0333">Golgi apparatus</keyword>
<keyword id="KW-0464">Manganese</keyword>
<keyword id="KW-0472">Membrane</keyword>
<keyword id="KW-0479">Metal-binding</keyword>
<keyword id="KW-1185">Reference proteome</keyword>
<keyword id="KW-0735">Signal-anchor</keyword>
<keyword id="KW-0808">Transferase</keyword>
<keyword id="KW-0812">Transmembrane</keyword>
<keyword id="KW-1133">Transmembrane helix</keyword>
<dbReference type="EC" id="2.4.1.222" evidence="2"/>
<dbReference type="EMBL" id="AY608926">
    <property type="protein sequence ID" value="AAT46070.1"/>
    <property type="molecule type" value="mRNA"/>
</dbReference>
<dbReference type="EMBL" id="BC115218">
    <property type="protein sequence ID" value="AAI15219.1"/>
    <property type="molecule type" value="mRNA"/>
</dbReference>
<dbReference type="EMBL" id="BC125890">
    <property type="protein sequence ID" value="AAI25891.1"/>
    <property type="molecule type" value="mRNA"/>
</dbReference>
<dbReference type="RefSeq" id="NP_001007789.1">
    <property type="nucleotide sequence ID" value="NM_001007788.1"/>
</dbReference>
<dbReference type="SMR" id="Q5YB40"/>
<dbReference type="FunCoup" id="Q5YB40">
    <property type="interactions" value="83"/>
</dbReference>
<dbReference type="STRING" id="7955.ENSDARP00000063007"/>
<dbReference type="CAZy" id="GT31">
    <property type="family name" value="Glycosyltransferase Family 31"/>
</dbReference>
<dbReference type="GlyCosmos" id="Q5YB40">
    <property type="glycosylation" value="1 site, No reported glycans"/>
</dbReference>
<dbReference type="PaxDb" id="7955-ENSDARP00000063007"/>
<dbReference type="Ensembl" id="ENSDART00000063008">
    <property type="protein sequence ID" value="ENSDARP00000063007"/>
    <property type="gene ID" value="ENSDARG00000042925"/>
</dbReference>
<dbReference type="GeneID" id="493633"/>
<dbReference type="KEGG" id="dre:493633"/>
<dbReference type="AGR" id="ZFIN:ZDB-GENE-041130-1"/>
<dbReference type="CTD" id="4242"/>
<dbReference type="ZFIN" id="ZDB-GENE-041130-1">
    <property type="gene designation" value="mfng"/>
</dbReference>
<dbReference type="eggNOG" id="ENOG502QUF4">
    <property type="taxonomic scope" value="Eukaryota"/>
</dbReference>
<dbReference type="HOGENOM" id="CLU_056611_0_1_1"/>
<dbReference type="InParanoid" id="Q5YB40"/>
<dbReference type="OMA" id="GSHFVDT"/>
<dbReference type="OrthoDB" id="8959630at2759"/>
<dbReference type="PhylomeDB" id="Q5YB40"/>
<dbReference type="TreeFam" id="TF324207"/>
<dbReference type="PRO" id="PR:Q5YB40"/>
<dbReference type="Proteomes" id="UP000000437">
    <property type="component" value="Chromosome 22"/>
</dbReference>
<dbReference type="Bgee" id="ENSDARG00000042925">
    <property type="expression patterns" value="Expressed in spleen and 16 other cell types or tissues"/>
</dbReference>
<dbReference type="ExpressionAtlas" id="Q5YB40">
    <property type="expression patterns" value="baseline"/>
</dbReference>
<dbReference type="GO" id="GO:0000139">
    <property type="term" value="C:Golgi membrane"/>
    <property type="evidence" value="ECO:0007669"/>
    <property type="project" value="UniProtKB-SubCell"/>
</dbReference>
<dbReference type="GO" id="GO:0046872">
    <property type="term" value="F:metal ion binding"/>
    <property type="evidence" value="ECO:0007669"/>
    <property type="project" value="UniProtKB-KW"/>
</dbReference>
<dbReference type="GO" id="GO:0033829">
    <property type="term" value="F:O-fucosylpeptide 3-beta-N-acetylglucosaminyltransferase activity"/>
    <property type="evidence" value="ECO:0000318"/>
    <property type="project" value="GO_Central"/>
</dbReference>
<dbReference type="GO" id="GO:0007389">
    <property type="term" value="P:pattern specification process"/>
    <property type="evidence" value="ECO:0007669"/>
    <property type="project" value="InterPro"/>
</dbReference>
<dbReference type="GO" id="GO:0008593">
    <property type="term" value="P:regulation of Notch signaling pathway"/>
    <property type="evidence" value="ECO:0000250"/>
    <property type="project" value="UniProtKB"/>
</dbReference>
<dbReference type="FunFam" id="3.90.550.50:FF:000003">
    <property type="entry name" value="Beta-1,3-N-acetylglucosaminyltransferase"/>
    <property type="match status" value="1"/>
</dbReference>
<dbReference type="Gene3D" id="3.90.550.50">
    <property type="match status" value="1"/>
</dbReference>
<dbReference type="InterPro" id="IPR017374">
    <property type="entry name" value="Fringe"/>
</dbReference>
<dbReference type="InterPro" id="IPR003378">
    <property type="entry name" value="Fringe-like_glycosylTrfase"/>
</dbReference>
<dbReference type="PANTHER" id="PTHR10811">
    <property type="entry name" value="FRINGE-RELATED"/>
    <property type="match status" value="1"/>
</dbReference>
<dbReference type="Pfam" id="PF02434">
    <property type="entry name" value="Fringe"/>
    <property type="match status" value="1"/>
</dbReference>
<dbReference type="PIRSF" id="PIRSF038073">
    <property type="entry name" value="B-acetylgalactosaminyltfrase"/>
    <property type="match status" value="1"/>
</dbReference>
<proteinExistence type="evidence at transcript level"/>
<comment type="function">
    <text evidence="2">Glycosyltransferase that initiates the elongation of O-linked fucose residues attached to EGF-like repeats in the extracellular domain of Notch molecules.</text>
</comment>
<comment type="catalytic activity">
    <reaction evidence="2">
        <text>3-O-(alpha-L-fucosyl)-L-threonyl-[EGF-like domain protein] + UDP-N-acetyl-alpha-D-glucosamine = 3-O-(N-acetyl-beta-D-glucosaminyl-(1-&gt;3)-alpha-L-fucosyl)-L-threonyl-[EGF-like domain protein] + UDP + H(+)</text>
        <dbReference type="Rhea" id="RHEA:70531"/>
        <dbReference type="Rhea" id="RHEA-COMP:17922"/>
        <dbReference type="Rhea" id="RHEA-COMP:17923"/>
        <dbReference type="ChEBI" id="CHEBI:15378"/>
        <dbReference type="ChEBI" id="CHEBI:57705"/>
        <dbReference type="ChEBI" id="CHEBI:58223"/>
        <dbReference type="ChEBI" id="CHEBI:189631"/>
        <dbReference type="ChEBI" id="CHEBI:189634"/>
        <dbReference type="EC" id="2.4.1.222"/>
    </reaction>
</comment>
<comment type="catalytic activity">
    <reaction evidence="2">
        <text>3-O-(alpha-L-fucosyl)-L-seryl-[EGF-like domain protein] + UDP-N-acetyl-alpha-D-glucosamine = 3-O-(N-acetyl-beta-D-glucosaminyl-(1-&gt;3)-alpha-L-fucosyl)-L-seryl-[EGF-like domain protein] + UDP + H(+)</text>
        <dbReference type="Rhea" id="RHEA:70511"/>
        <dbReference type="Rhea" id="RHEA-COMP:17919"/>
        <dbReference type="Rhea" id="RHEA-COMP:17920"/>
        <dbReference type="ChEBI" id="CHEBI:15378"/>
        <dbReference type="ChEBI" id="CHEBI:57705"/>
        <dbReference type="ChEBI" id="CHEBI:58223"/>
        <dbReference type="ChEBI" id="CHEBI:189632"/>
        <dbReference type="ChEBI" id="CHEBI:189633"/>
        <dbReference type="EC" id="2.4.1.222"/>
    </reaction>
</comment>
<comment type="cofactor">
    <cofactor evidence="2">
        <name>Mn(2+)</name>
        <dbReference type="ChEBI" id="CHEBI:29035"/>
    </cofactor>
    <text evidence="2">Has some activity with cobalt, magnesium and calcium, but not zinc.</text>
</comment>
<comment type="subcellular location">
    <subcellularLocation>
        <location evidence="1">Golgi apparatus membrane</location>
        <topology evidence="1">Single-pass type II membrane protein</topology>
    </subcellularLocation>
</comment>
<comment type="developmental stage">
    <text evidence="5">First detected at the 12-somite stage. From the 20-somite stage, expressed in the otic vesicle.</text>
</comment>
<comment type="similarity">
    <text evidence="3">Belongs to the glycosyltransferase 31 family.</text>
</comment>